<proteinExistence type="evidence at transcript level"/>
<reference key="1">
    <citation type="submission" date="2004-11" db="EMBL/GenBank/DDBJ databases">
        <authorList>
            <consortium name="The German cDNA consortium"/>
        </authorList>
    </citation>
    <scope>NUCLEOTIDE SEQUENCE [LARGE SCALE MRNA]</scope>
    <source>
        <tissue>Brain cortex</tissue>
    </source>
</reference>
<feature type="signal peptide" evidence="7">
    <location>
        <begin position="1"/>
        <end position="20"/>
    </location>
</feature>
<feature type="chain" id="PRO_0000004200" description="Calnexin">
    <location>
        <begin position="21"/>
        <end position="592"/>
    </location>
</feature>
<feature type="topological domain" description="Lumenal" evidence="7">
    <location>
        <begin position="21"/>
        <end position="481"/>
    </location>
</feature>
<feature type="transmembrane region" description="Helical" evidence="7">
    <location>
        <begin position="482"/>
        <end position="502"/>
    </location>
</feature>
<feature type="topological domain" description="Cytoplasmic" evidence="7">
    <location>
        <begin position="503"/>
        <end position="592"/>
    </location>
</feature>
<feature type="repeat" description="1-1">
    <location>
        <begin position="278"/>
        <end position="290"/>
    </location>
</feature>
<feature type="repeat" description="1-2">
    <location>
        <begin position="295"/>
        <end position="307"/>
    </location>
</feature>
<feature type="repeat" description="1-3">
    <location>
        <begin position="314"/>
        <end position="326"/>
    </location>
</feature>
<feature type="repeat" description="1-4">
    <location>
        <begin position="333"/>
        <end position="345"/>
    </location>
</feature>
<feature type="repeat" description="2-1">
    <location>
        <begin position="348"/>
        <end position="358"/>
    </location>
</feature>
<feature type="repeat" description="2-2">
    <location>
        <begin position="367"/>
        <end position="377"/>
    </location>
</feature>
<feature type="repeat" description="2-3">
    <location>
        <begin position="381"/>
        <end position="391"/>
    </location>
</feature>
<feature type="repeat" description="2-4">
    <location>
        <begin position="395"/>
        <end position="405"/>
    </location>
</feature>
<feature type="region of interest" description="Disordered" evidence="8">
    <location>
        <begin position="260"/>
        <end position="345"/>
    </location>
</feature>
<feature type="region of interest" description="P domain (Extended arm)" evidence="1">
    <location>
        <begin position="276"/>
        <end position="409"/>
    </location>
</feature>
<feature type="region of interest" description="4 X approximate repeats">
    <location>
        <begin position="278"/>
        <end position="345"/>
    </location>
</feature>
<feature type="region of interest" description="Interaction with PPIB" evidence="1">
    <location>
        <begin position="326"/>
        <end position="359"/>
    </location>
</feature>
<feature type="region of interest" description="4 X approximate repeats">
    <location>
        <begin position="348"/>
        <end position="405"/>
    </location>
</feature>
<feature type="region of interest" description="Sufficient to mediate interaction with SGIP1" evidence="1">
    <location>
        <begin position="503"/>
        <end position="592"/>
    </location>
</feature>
<feature type="region of interest" description="Disordered" evidence="8">
    <location>
        <begin position="511"/>
        <end position="592"/>
    </location>
</feature>
<feature type="compositionally biased region" description="Basic and acidic residues" evidence="8">
    <location>
        <begin position="274"/>
        <end position="319"/>
    </location>
</feature>
<feature type="compositionally biased region" description="Acidic residues" evidence="8">
    <location>
        <begin position="323"/>
        <end position="345"/>
    </location>
</feature>
<feature type="compositionally biased region" description="Acidic residues" evidence="8">
    <location>
        <begin position="525"/>
        <end position="547"/>
    </location>
</feature>
<feature type="binding site" evidence="3">
    <location>
        <position position="74"/>
    </location>
    <ligand>
        <name>Ca(2+)</name>
        <dbReference type="ChEBI" id="CHEBI:29108"/>
    </ligand>
</feature>
<feature type="binding site" evidence="3">
    <location>
        <position position="117"/>
    </location>
    <ligand>
        <name>Ca(2+)</name>
        <dbReference type="ChEBI" id="CHEBI:29108"/>
    </ligand>
</feature>
<feature type="binding site" evidence="2">
    <location>
        <position position="164"/>
    </location>
    <ligand>
        <name>an alpha-D-glucoside</name>
        <dbReference type="ChEBI" id="CHEBI:22390"/>
    </ligand>
</feature>
<feature type="binding site" evidence="2">
    <location>
        <position position="166"/>
    </location>
    <ligand>
        <name>an alpha-D-glucoside</name>
        <dbReference type="ChEBI" id="CHEBI:22390"/>
    </ligand>
</feature>
<feature type="binding site" evidence="2">
    <location>
        <position position="185"/>
    </location>
    <ligand>
        <name>an alpha-D-glucoside</name>
        <dbReference type="ChEBI" id="CHEBI:22390"/>
    </ligand>
</feature>
<feature type="binding site" evidence="2">
    <location>
        <position position="192"/>
    </location>
    <ligand>
        <name>an alpha-D-glucoside</name>
        <dbReference type="ChEBI" id="CHEBI:22390"/>
    </ligand>
</feature>
<feature type="binding site" evidence="2">
    <location>
        <position position="425"/>
    </location>
    <ligand>
        <name>an alpha-D-glucoside</name>
        <dbReference type="ChEBI" id="CHEBI:22390"/>
    </ligand>
</feature>
<feature type="binding site" evidence="3">
    <location>
        <position position="436"/>
    </location>
    <ligand>
        <name>Ca(2+)</name>
        <dbReference type="ChEBI" id="CHEBI:29108"/>
    </ligand>
</feature>
<feature type="modified residue" description="N6-acetyllysine" evidence="4">
    <location>
        <position position="137"/>
    </location>
</feature>
<feature type="modified residue" description="Phosphoserine" evidence="4">
    <location>
        <position position="554"/>
    </location>
</feature>
<feature type="modified residue" description="Phosphothreonine" evidence="4">
    <location>
        <position position="562"/>
    </location>
</feature>
<feature type="modified residue" description="Phosphoserine; by MAPK3" evidence="4">
    <location>
        <position position="564"/>
    </location>
</feature>
<feature type="modified residue" description="Phosphoserine" evidence="4">
    <location>
        <position position="583"/>
    </location>
</feature>
<feature type="lipid moiety-binding region" description="S-palmitoyl cysteine" evidence="1">
    <location>
        <position position="502"/>
    </location>
</feature>
<feature type="lipid moiety-binding region" description="S-palmitoyl cysteine" evidence="1">
    <location>
        <position position="503"/>
    </location>
</feature>
<feature type="disulfide bond" evidence="3">
    <location>
        <begin position="160"/>
        <end position="194"/>
    </location>
</feature>
<feature type="disulfide bond" evidence="3">
    <location>
        <begin position="360"/>
        <end position="366"/>
    </location>
</feature>
<feature type="sequence conflict" description="In Ref. 1; CAH93476." evidence="9" ref="1">
    <original>W</original>
    <variation>R</variation>
    <location>
        <position position="83"/>
    </location>
</feature>
<feature type="sequence conflict" description="In Ref. 1; CAH92563." evidence="9" ref="1">
    <original>T</original>
    <variation>A</variation>
    <location>
        <position position="143"/>
    </location>
</feature>
<feature type="sequence conflict" description="In Ref. 1; CAH92697." evidence="9" ref="1">
    <original>K</original>
    <variation>R</variation>
    <location>
        <position position="217"/>
    </location>
</feature>
<evidence type="ECO:0000250" key="1"/>
<evidence type="ECO:0000250" key="2">
    <source>
        <dbReference type="UniProtKB" id="P14211"/>
    </source>
</evidence>
<evidence type="ECO:0000250" key="3">
    <source>
        <dbReference type="UniProtKB" id="P24643"/>
    </source>
</evidence>
<evidence type="ECO:0000250" key="4">
    <source>
        <dbReference type="UniProtKB" id="P27824"/>
    </source>
</evidence>
<evidence type="ECO:0000250" key="5">
    <source>
        <dbReference type="UniProtKB" id="P35564"/>
    </source>
</evidence>
<evidence type="ECO:0000250" key="6">
    <source>
        <dbReference type="UniProtKB" id="P35565"/>
    </source>
</evidence>
<evidence type="ECO:0000255" key="7"/>
<evidence type="ECO:0000256" key="8">
    <source>
        <dbReference type="SAM" id="MobiDB-lite"/>
    </source>
</evidence>
<evidence type="ECO:0000305" key="9"/>
<sequence>MEGKWLLCMLLVLGTAIVEAHDGHDDDVIDIEDDLDDVIEEVEDSKPDTTAPPSSPKVTYKAPVPTGEVYFADSFDRGTLSGWILSKAKKDDTDDEIAKYDGKWEVDEMKESKLPGDKGLVLMSRAKHHAISAKLNKPFLFDTKPLIVQYEVNFQNGIECGGAYVKLLSKTPELNLDQFHDKTPYTIMFGPDKCGEDYKLHFIFRHKNPKTGIYEEKHAKRPDADLKTYFTDKKTHLYTLILNPDNSFEILVDQSVVNSGNLLNDMTPPVNPSREIEDPEDRKPEDWDERPKIPDPEAVKPDDWDEDAPAKIPDEEATKPEGWLDDEPEYVPDPDAEKPEDWDEDMDGEWEAPQIANPKCESAPGCGVWQRPMIDNPNYKGKWKPPMIDNPSYQGIWKPRKIPNPDFFEDLEPFRMTPFSAIGLELWSMTSDIFFDNFIICADRRIVDDWANDGWGLKKAADGAAEPGVVGQMIEAAEERPWLWVVYILTVALPVFLVILFCCSGKKQTSAMEYKKTDAPQPDVKEEEEEKEEEKDKGDEEEEGEEKLEEKQKSDAEEDGGTVSQEEEDRKPKAEEDEILNRSPRNRKPRRE</sequence>
<keyword id="KW-0007">Acetylation</keyword>
<keyword id="KW-0106">Calcium</keyword>
<keyword id="KW-0143">Chaperone</keyword>
<keyword id="KW-1015">Disulfide bond</keyword>
<keyword id="KW-0256">Endoplasmic reticulum</keyword>
<keyword id="KW-0430">Lectin</keyword>
<keyword id="KW-0449">Lipoprotein</keyword>
<keyword id="KW-0472">Membrane</keyword>
<keyword id="KW-0479">Metal-binding</keyword>
<keyword id="KW-0496">Mitochondrion</keyword>
<keyword id="KW-0564">Palmitate</keyword>
<keyword id="KW-0597">Phosphoprotein</keyword>
<keyword id="KW-1185">Reference proteome</keyword>
<keyword id="KW-0677">Repeat</keyword>
<keyword id="KW-0732">Signal</keyword>
<keyword id="KW-0812">Transmembrane</keyword>
<keyword id="KW-1133">Transmembrane helix</keyword>
<keyword id="KW-0832">Ubl conjugation</keyword>
<dbReference type="EMBL" id="CR860439">
    <property type="protein sequence ID" value="CAH92563.1"/>
    <property type="molecule type" value="mRNA"/>
</dbReference>
<dbReference type="EMBL" id="CR860572">
    <property type="protein sequence ID" value="CAH92697.1"/>
    <property type="molecule type" value="mRNA"/>
</dbReference>
<dbReference type="EMBL" id="CR861420">
    <property type="protein sequence ID" value="CAH93476.1"/>
    <property type="molecule type" value="mRNA"/>
</dbReference>
<dbReference type="RefSeq" id="NP_001127039.1">
    <property type="nucleotide sequence ID" value="NM_001133567.1"/>
</dbReference>
<dbReference type="RefSeq" id="XP_024102534.3">
    <property type="nucleotide sequence ID" value="XM_024246766.3"/>
</dbReference>
<dbReference type="RefSeq" id="XP_024102535.3">
    <property type="nucleotide sequence ID" value="XM_024246767.3"/>
</dbReference>
<dbReference type="RefSeq" id="XP_024102537.3">
    <property type="nucleotide sequence ID" value="XM_024246769.3"/>
</dbReference>
<dbReference type="SMR" id="Q5R440"/>
<dbReference type="FunCoup" id="Q5R440">
    <property type="interactions" value="3421"/>
</dbReference>
<dbReference type="STRING" id="9601.ENSPPYP00000018041"/>
<dbReference type="Ensembl" id="ENSPPYT00000053633.1">
    <property type="protein sequence ID" value="ENSPPYP00000041212.1"/>
    <property type="gene ID" value="ENSPPYG00000016126.2"/>
</dbReference>
<dbReference type="GeneID" id="100174065"/>
<dbReference type="KEGG" id="pon:100174065"/>
<dbReference type="CTD" id="821"/>
<dbReference type="GeneTree" id="ENSGT00950000182915"/>
<dbReference type="InParanoid" id="Q5R440"/>
<dbReference type="OrthoDB" id="1938156at2759"/>
<dbReference type="Proteomes" id="UP000001595">
    <property type="component" value="Chromosome 5"/>
</dbReference>
<dbReference type="GO" id="GO:0005783">
    <property type="term" value="C:endoplasmic reticulum"/>
    <property type="evidence" value="ECO:0000250"/>
    <property type="project" value="UniProtKB"/>
</dbReference>
<dbReference type="GO" id="GO:0005789">
    <property type="term" value="C:endoplasmic reticulum membrane"/>
    <property type="evidence" value="ECO:0000250"/>
    <property type="project" value="AgBase"/>
</dbReference>
<dbReference type="GO" id="GO:0033162">
    <property type="term" value="C:melanosome membrane"/>
    <property type="evidence" value="ECO:0007669"/>
    <property type="project" value="UniProtKB-SubCell"/>
</dbReference>
<dbReference type="GO" id="GO:0031966">
    <property type="term" value="C:mitochondrial membrane"/>
    <property type="evidence" value="ECO:0007669"/>
    <property type="project" value="UniProtKB-SubCell"/>
</dbReference>
<dbReference type="GO" id="GO:0098793">
    <property type="term" value="C:presynapse"/>
    <property type="evidence" value="ECO:0007669"/>
    <property type="project" value="GOC"/>
</dbReference>
<dbReference type="GO" id="GO:0005509">
    <property type="term" value="F:calcium ion binding"/>
    <property type="evidence" value="ECO:0007669"/>
    <property type="project" value="InterPro"/>
</dbReference>
<dbReference type="GO" id="GO:0030246">
    <property type="term" value="F:carbohydrate binding"/>
    <property type="evidence" value="ECO:0007669"/>
    <property type="project" value="UniProtKB-KW"/>
</dbReference>
<dbReference type="GO" id="GO:0051082">
    <property type="term" value="F:unfolded protein binding"/>
    <property type="evidence" value="ECO:0007669"/>
    <property type="project" value="InterPro"/>
</dbReference>
<dbReference type="GO" id="GO:0072583">
    <property type="term" value="P:clathrin-dependent endocytosis"/>
    <property type="evidence" value="ECO:0000250"/>
    <property type="project" value="UniProtKB"/>
</dbReference>
<dbReference type="GO" id="GO:0036503">
    <property type="term" value="P:ERAD pathway"/>
    <property type="evidence" value="ECO:0007669"/>
    <property type="project" value="TreeGrafter"/>
</dbReference>
<dbReference type="GO" id="GO:0006457">
    <property type="term" value="P:protein folding"/>
    <property type="evidence" value="ECO:0007669"/>
    <property type="project" value="InterPro"/>
</dbReference>
<dbReference type="GO" id="GO:0048488">
    <property type="term" value="P:synaptic vesicle endocytosis"/>
    <property type="evidence" value="ECO:0000250"/>
    <property type="project" value="UniProtKB"/>
</dbReference>
<dbReference type="FunFam" id="2.10.250.10:FF:000001">
    <property type="entry name" value="Calnexin homolog"/>
    <property type="match status" value="1"/>
</dbReference>
<dbReference type="FunFam" id="2.60.120.200:FF:000430">
    <property type="entry name" value="Si:ch211-274f20.2"/>
    <property type="match status" value="1"/>
</dbReference>
<dbReference type="Gene3D" id="2.60.120.200">
    <property type="match status" value="1"/>
</dbReference>
<dbReference type="Gene3D" id="2.10.250.10">
    <property type="entry name" value="Calreticulin/calnexin, P domain"/>
    <property type="match status" value="1"/>
</dbReference>
<dbReference type="InterPro" id="IPR001580">
    <property type="entry name" value="Calret/calnex"/>
</dbReference>
<dbReference type="InterPro" id="IPR018124">
    <property type="entry name" value="Calret/calnex_CS"/>
</dbReference>
<dbReference type="InterPro" id="IPR009033">
    <property type="entry name" value="Calreticulin/calnexin_P_dom_sf"/>
</dbReference>
<dbReference type="InterPro" id="IPR013320">
    <property type="entry name" value="ConA-like_dom_sf"/>
</dbReference>
<dbReference type="PANTHER" id="PTHR11073:SF11">
    <property type="entry name" value="CALNEXIN"/>
    <property type="match status" value="1"/>
</dbReference>
<dbReference type="PANTHER" id="PTHR11073">
    <property type="entry name" value="CALRETICULIN AND CALNEXIN"/>
    <property type="match status" value="1"/>
</dbReference>
<dbReference type="Pfam" id="PF00262">
    <property type="entry name" value="Calreticulin"/>
    <property type="match status" value="1"/>
</dbReference>
<dbReference type="PRINTS" id="PR00626">
    <property type="entry name" value="CALRETICULIN"/>
</dbReference>
<dbReference type="SUPFAM" id="SSF49899">
    <property type="entry name" value="Concanavalin A-like lectins/glucanases"/>
    <property type="match status" value="2"/>
</dbReference>
<dbReference type="SUPFAM" id="SSF63887">
    <property type="entry name" value="P-domain of calnexin/calreticulin"/>
    <property type="match status" value="1"/>
</dbReference>
<dbReference type="PROSITE" id="PS00803">
    <property type="entry name" value="CALRETICULIN_1"/>
    <property type="match status" value="1"/>
</dbReference>
<dbReference type="PROSITE" id="PS00804">
    <property type="entry name" value="CALRETICULIN_2"/>
    <property type="match status" value="1"/>
</dbReference>
<dbReference type="PROSITE" id="PS00805">
    <property type="entry name" value="CALRETICULIN_REPEAT"/>
    <property type="match status" value="3"/>
</dbReference>
<protein>
    <recommendedName>
        <fullName>Calnexin</fullName>
    </recommendedName>
</protein>
<comment type="function">
    <text evidence="1">Calcium-binding protein that interacts with newly synthesized monoglucosylated glycoproteins in the endoplasmic reticulum. It may act in assisting protein assembly and/or in the retention within the ER of unassembled protein subunits. It seems to play a major role in the quality control apparatus of the ER by the retention of incorrectly folded proteins. Associated with partial T-cell antigen receptor complexes that escape the ER of immature thymocytes, it may function as a signaling complex regulating thymocyte maturation. Additionally it may play a role in receptor-mediated endocytosis at the synapse (By similarity).</text>
</comment>
<comment type="subunit">
    <text evidence="3 4 5 6">Interacts with MAPK3/ERK1. Interacts with KCNH2. Associates with ribosomes. Interacts with SGIP1; involved in negative regulation of endocytosis. The palmitoylated form interacts with the ribosome-translocon complex component SSR1, promoting efficient folding of glycoproteins. Interacts with SERPINA2P/SERPINA2 and with the S and Z variants of SERPINA1. Interacts with PPIB. Interacts with ZNRF4. Interacts with SMIM22 (By similarity). Interacts with TMX2 (By similarity). Interacts with TMEM35A/NACHO and CHRNA7 (By similarity). Interacts with reticulophagy regulators RETREG2 and RETREG3 (By similarity). Interacts with DNM1L; may form part of a larger protein complex at the ER-mitochondrial interface during mitochondrial fission (By similarity). Interacts with ADAM7 (By similarity).</text>
</comment>
<comment type="subcellular location">
    <subcellularLocation>
        <location evidence="3">Endoplasmic reticulum membrane</location>
        <topology evidence="7">Single-pass type I membrane protein</topology>
    </subcellularLocation>
    <subcellularLocation>
        <location evidence="3">Mitochondrion membrane</location>
        <topology evidence="7">Single-pass type I membrane protein</topology>
    </subcellularLocation>
    <subcellularLocation>
        <location evidence="4">Melanosome membrane</location>
        <topology evidence="7">Single-pass type I membrane protein</topology>
    </subcellularLocation>
    <text evidence="3 4">The palmitoylated form preferentially localizes to the perinuclear rough ER (By similarity). Localizes to endoplasmic reticulum mitochondria-associated membrane (MAMs) that connect the endoplasmic reticulum and the mitochondria (By similarity).</text>
</comment>
<comment type="PTM">
    <text evidence="1">Phosphorylated at Ser-564 by MAPK3/ERK1. Phosphorylation by MAPK3/ERK1 increases its association with ribosomes (By similarity).</text>
</comment>
<comment type="PTM">
    <text evidence="1">Palmitoylation by DHHC6 leads to the preferential localization to the perinuclear rough ER. It mediates the association of calnexin with the ribosome-translocon complex (RTC) which is required for efficient folding of glycosylated proteins (By similarity).</text>
</comment>
<comment type="PTM">
    <text evidence="4">Ubiquitinated, leading to proteasomal degradation. Probably ubiquitinated by ZNRF4.</text>
</comment>
<comment type="similarity">
    <text evidence="9">Belongs to the calreticulin family.</text>
</comment>
<organism>
    <name type="scientific">Pongo abelii</name>
    <name type="common">Sumatran orangutan</name>
    <name type="synonym">Pongo pygmaeus abelii</name>
    <dbReference type="NCBI Taxonomy" id="9601"/>
    <lineage>
        <taxon>Eukaryota</taxon>
        <taxon>Metazoa</taxon>
        <taxon>Chordata</taxon>
        <taxon>Craniata</taxon>
        <taxon>Vertebrata</taxon>
        <taxon>Euteleostomi</taxon>
        <taxon>Mammalia</taxon>
        <taxon>Eutheria</taxon>
        <taxon>Euarchontoglires</taxon>
        <taxon>Primates</taxon>
        <taxon>Haplorrhini</taxon>
        <taxon>Catarrhini</taxon>
        <taxon>Hominidae</taxon>
        <taxon>Pongo</taxon>
    </lineage>
</organism>
<name>CALX_PONAB</name>
<gene>
    <name type="primary">CANX</name>
</gene>
<accession>Q5R440</accession>
<accession>Q5R6B9</accession>
<accession>Q5R6P7</accession>